<accession>Q02256</accession>
<accession>D6VVV7</accession>
<dbReference type="EC" id="3.1.3.48" evidence="2"/>
<dbReference type="EMBL" id="L04673">
    <property type="protein sequence ID" value="AAA34874.1"/>
    <property type="molecule type" value="Genomic_DNA"/>
</dbReference>
<dbReference type="EMBL" id="Z38061">
    <property type="protein sequence ID" value="CAA86186.1"/>
    <property type="molecule type" value="Genomic_DNA"/>
</dbReference>
<dbReference type="EMBL" id="M69294">
    <property type="status" value="NOT_ANNOTATED_CDS"/>
    <property type="molecule type" value="Genomic_DNA"/>
</dbReference>
<dbReference type="EMBL" id="BK006942">
    <property type="protein sequence ID" value="DAA08573.1"/>
    <property type="molecule type" value="Genomic_DNA"/>
</dbReference>
<dbReference type="PIR" id="S31304">
    <property type="entry name" value="S31304"/>
</dbReference>
<dbReference type="RefSeq" id="NP_012292.3">
    <property type="nucleotide sequence ID" value="NM_001179548.3"/>
</dbReference>
<dbReference type="PDB" id="6N8M">
    <property type="method" value="EM"/>
    <property type="resolution" value="3.50 A"/>
    <property type="chains" value="Y=1-364"/>
</dbReference>
<dbReference type="PDB" id="6N8N">
    <property type="method" value="EM"/>
    <property type="resolution" value="3.80 A"/>
    <property type="chains" value="Y=1-364"/>
</dbReference>
<dbReference type="PDB" id="6N8O">
    <property type="method" value="EM"/>
    <property type="resolution" value="3.50 A"/>
    <property type="chains" value="Y=1-364"/>
</dbReference>
<dbReference type="PDB" id="6RZZ">
    <property type="method" value="EM"/>
    <property type="resolution" value="3.20 A"/>
    <property type="chains" value="s=1-364"/>
</dbReference>
<dbReference type="PDB" id="6S05">
    <property type="method" value="EM"/>
    <property type="resolution" value="3.90 A"/>
    <property type="chains" value="s=1-364"/>
</dbReference>
<dbReference type="PDBsum" id="6N8M"/>
<dbReference type="PDBsum" id="6N8N"/>
<dbReference type="PDBsum" id="6N8O"/>
<dbReference type="PDBsum" id="6RZZ"/>
<dbReference type="PDBsum" id="6S05"/>
<dbReference type="EMDB" id="EMD-0372"/>
<dbReference type="EMDB" id="EMD-0373"/>
<dbReference type="EMDB" id="EMD-0374"/>
<dbReference type="EMDB" id="EMD-10068"/>
<dbReference type="EMDB" id="EMD-10071"/>
<dbReference type="SMR" id="Q02256"/>
<dbReference type="BioGRID" id="35017">
    <property type="interactions" value="134"/>
</dbReference>
<dbReference type="DIP" id="DIP-5192N"/>
<dbReference type="FunCoup" id="Q02256">
    <property type="interactions" value="850"/>
</dbReference>
<dbReference type="IntAct" id="Q02256">
    <property type="interactions" value="31"/>
</dbReference>
<dbReference type="MINT" id="Q02256"/>
<dbReference type="STRING" id="4932.YIR026C"/>
<dbReference type="iPTMnet" id="Q02256"/>
<dbReference type="PaxDb" id="4932-YIR026C"/>
<dbReference type="PeptideAtlas" id="Q02256"/>
<dbReference type="EnsemblFungi" id="YIR026C_mRNA">
    <property type="protein sequence ID" value="YIR026C"/>
    <property type="gene ID" value="YIR026C"/>
</dbReference>
<dbReference type="GeneID" id="854844"/>
<dbReference type="KEGG" id="sce:YIR026C"/>
<dbReference type="AGR" id="SGD:S000001465"/>
<dbReference type="SGD" id="S000001465">
    <property type="gene designation" value="YVH1"/>
</dbReference>
<dbReference type="VEuPathDB" id="FungiDB:YIR026C"/>
<dbReference type="eggNOG" id="KOG1716">
    <property type="taxonomic scope" value="Eukaryota"/>
</dbReference>
<dbReference type="GeneTree" id="ENSGT00940000174926"/>
<dbReference type="HOGENOM" id="CLU_023312_0_1_1"/>
<dbReference type="InParanoid" id="Q02256"/>
<dbReference type="OMA" id="FAWQGMQ"/>
<dbReference type="OrthoDB" id="2017893at2759"/>
<dbReference type="BioCyc" id="YEAST:G3O-31445-MONOMER"/>
<dbReference type="BioGRID-ORCS" id="854844">
    <property type="hits" value="0 hits in 10 CRISPR screens"/>
</dbReference>
<dbReference type="CD-CODE" id="E03F929F">
    <property type="entry name" value="Stress granule"/>
</dbReference>
<dbReference type="PRO" id="PR:Q02256"/>
<dbReference type="Proteomes" id="UP000002311">
    <property type="component" value="Chromosome IX"/>
</dbReference>
<dbReference type="RNAct" id="Q02256">
    <property type="molecule type" value="protein"/>
</dbReference>
<dbReference type="GO" id="GO:0005737">
    <property type="term" value="C:cytoplasm"/>
    <property type="evidence" value="ECO:0000314"/>
    <property type="project" value="SGD"/>
</dbReference>
<dbReference type="GO" id="GO:0010494">
    <property type="term" value="C:cytoplasmic stress granule"/>
    <property type="evidence" value="ECO:0007005"/>
    <property type="project" value="SGD"/>
</dbReference>
<dbReference type="GO" id="GO:0005634">
    <property type="term" value="C:nucleus"/>
    <property type="evidence" value="ECO:0000314"/>
    <property type="project" value="SGD"/>
</dbReference>
<dbReference type="GO" id="GO:1990275">
    <property type="term" value="F:preribosome binding"/>
    <property type="evidence" value="ECO:0000314"/>
    <property type="project" value="SGD"/>
</dbReference>
<dbReference type="GO" id="GO:0004725">
    <property type="term" value="F:protein tyrosine phosphatase activity"/>
    <property type="evidence" value="ECO:0000314"/>
    <property type="project" value="SGD"/>
</dbReference>
<dbReference type="GO" id="GO:0008138">
    <property type="term" value="F:protein tyrosine/serine/threonine phosphatase activity"/>
    <property type="evidence" value="ECO:0000247"/>
    <property type="project" value="SGD"/>
</dbReference>
<dbReference type="GO" id="GO:0030476">
    <property type="term" value="P:ascospore wall assembly"/>
    <property type="evidence" value="ECO:0000315"/>
    <property type="project" value="SGD"/>
</dbReference>
<dbReference type="GO" id="GO:0006914">
    <property type="term" value="P:autophagy"/>
    <property type="evidence" value="ECO:0000315"/>
    <property type="project" value="SGD"/>
</dbReference>
<dbReference type="GO" id="GO:0006995">
    <property type="term" value="P:cellular response to nitrogen starvation"/>
    <property type="evidence" value="ECO:0000315"/>
    <property type="project" value="SGD"/>
</dbReference>
<dbReference type="GO" id="GO:0051321">
    <property type="term" value="P:meiotic cell cycle"/>
    <property type="evidence" value="ECO:0000315"/>
    <property type="project" value="SGD"/>
</dbReference>
<dbReference type="GO" id="GO:2000786">
    <property type="term" value="P:positive regulation of autophagosome assembly"/>
    <property type="evidence" value="ECO:0000315"/>
    <property type="project" value="SGD"/>
</dbReference>
<dbReference type="GO" id="GO:0000027">
    <property type="term" value="P:ribosomal large subunit assembly"/>
    <property type="evidence" value="ECO:0000315"/>
    <property type="project" value="SGD"/>
</dbReference>
<dbReference type="GO" id="GO:0000055">
    <property type="term" value="P:ribosomal large subunit export from nucleus"/>
    <property type="evidence" value="ECO:0000315"/>
    <property type="project" value="SGD"/>
</dbReference>
<dbReference type="CDD" id="cd14518">
    <property type="entry name" value="DSP_fungal_YVH1"/>
    <property type="match status" value="1"/>
</dbReference>
<dbReference type="FunFam" id="3.90.190.10:FF:000116">
    <property type="entry name" value="YVH1p Protein phosphatase"/>
    <property type="match status" value="1"/>
</dbReference>
<dbReference type="Gene3D" id="3.90.190.10">
    <property type="entry name" value="Protein tyrosine phosphatase superfamily"/>
    <property type="match status" value="1"/>
</dbReference>
<dbReference type="InterPro" id="IPR000340">
    <property type="entry name" value="Dual-sp_phosphatase_cat-dom"/>
</dbReference>
<dbReference type="InterPro" id="IPR016278">
    <property type="entry name" value="DUSP12"/>
</dbReference>
<dbReference type="InterPro" id="IPR029021">
    <property type="entry name" value="Prot-tyrosine_phosphatase-like"/>
</dbReference>
<dbReference type="InterPro" id="IPR000387">
    <property type="entry name" value="Tyr_Pase_dom"/>
</dbReference>
<dbReference type="InterPro" id="IPR020422">
    <property type="entry name" value="TYR_PHOSPHATASE_DUAL_dom"/>
</dbReference>
<dbReference type="PANTHER" id="PTHR45848:SF4">
    <property type="entry name" value="DUAL SPECIFICITY PROTEIN PHOSPHATASE 12"/>
    <property type="match status" value="1"/>
</dbReference>
<dbReference type="PANTHER" id="PTHR45848">
    <property type="entry name" value="DUAL SPECIFICITY PROTEIN PHOSPHATASE 12 FAMILY MEMBER"/>
    <property type="match status" value="1"/>
</dbReference>
<dbReference type="Pfam" id="PF00782">
    <property type="entry name" value="DSPc"/>
    <property type="match status" value="1"/>
</dbReference>
<dbReference type="PIRSF" id="PIRSF000941">
    <property type="entry name" value="DUSP12"/>
    <property type="match status" value="1"/>
</dbReference>
<dbReference type="SMART" id="SM00195">
    <property type="entry name" value="DSPc"/>
    <property type="match status" value="1"/>
</dbReference>
<dbReference type="SUPFAM" id="SSF52799">
    <property type="entry name" value="(Phosphotyrosine protein) phosphatases II"/>
    <property type="match status" value="1"/>
</dbReference>
<dbReference type="PROSITE" id="PS50056">
    <property type="entry name" value="TYR_PHOSPHATASE_2"/>
    <property type="match status" value="1"/>
</dbReference>
<dbReference type="PROSITE" id="PS50054">
    <property type="entry name" value="TYR_PHOSPHATASE_DUAL"/>
    <property type="match status" value="1"/>
</dbReference>
<reference key="1">
    <citation type="journal article" date="1992" name="Proc. Natl. Acad. Sci. U.S.A.">
        <title>A yeast protein phosphatase related to the vaccinia virus VH1 phosphatase is induced by nitrogen starvation.</title>
        <authorList>
            <person name="Guan K."/>
            <person name="Hakes D.J."/>
            <person name="Wang Y."/>
            <person name="Park H.-D."/>
            <person name="Cooper T.G."/>
            <person name="Dixon J.E."/>
        </authorList>
    </citation>
    <scope>NUCLEOTIDE SEQUENCE [GENOMIC DNA]</scope>
    <scope>CATALYTIC ACTIVITY</scope>
    <scope>INDUCTION BY NITROGEN STARVATION</scope>
</reference>
<reference key="2">
    <citation type="journal article" date="1997" name="Nature">
        <title>The nucleotide sequence of Saccharomyces cerevisiae chromosome IX.</title>
        <authorList>
            <person name="Churcher C.M."/>
            <person name="Bowman S."/>
            <person name="Badcock K."/>
            <person name="Bankier A.T."/>
            <person name="Brown D."/>
            <person name="Chillingworth T."/>
            <person name="Connor R."/>
            <person name="Devlin K."/>
            <person name="Gentles S."/>
            <person name="Hamlin N."/>
            <person name="Harris D.E."/>
            <person name="Horsnell T."/>
            <person name="Hunt S."/>
            <person name="Jagels K."/>
            <person name="Jones M."/>
            <person name="Lye G."/>
            <person name="Moule S."/>
            <person name="Odell C."/>
            <person name="Pearson D."/>
            <person name="Rajandream M.A."/>
            <person name="Rice P."/>
            <person name="Rowley N."/>
            <person name="Skelton J."/>
            <person name="Smith V."/>
            <person name="Walsh S.V."/>
            <person name="Whitehead S."/>
            <person name="Barrell B.G."/>
        </authorList>
    </citation>
    <scope>NUCLEOTIDE SEQUENCE [LARGE SCALE GENOMIC DNA]</scope>
    <source>
        <strain>ATCC 204508 / S288c</strain>
    </source>
</reference>
<reference key="3">
    <citation type="journal article" date="2014" name="G3 (Bethesda)">
        <title>The reference genome sequence of Saccharomyces cerevisiae: Then and now.</title>
        <authorList>
            <person name="Engel S.R."/>
            <person name="Dietrich F.S."/>
            <person name="Fisk D.G."/>
            <person name="Binkley G."/>
            <person name="Balakrishnan R."/>
            <person name="Costanzo M.C."/>
            <person name="Dwight S.S."/>
            <person name="Hitz B.C."/>
            <person name="Karra K."/>
            <person name="Nash R.S."/>
            <person name="Weng S."/>
            <person name="Wong E.D."/>
            <person name="Lloyd P."/>
            <person name="Skrzypek M.S."/>
            <person name="Miyasato S.R."/>
            <person name="Simison M."/>
            <person name="Cherry J.M."/>
        </authorList>
    </citation>
    <scope>GENOME REANNOTATION</scope>
    <source>
        <strain>ATCC 204508 / S288c</strain>
    </source>
</reference>
<reference key="4">
    <citation type="journal article" date="1991" name="Yeast">
        <title>The allantoinase (DAL1) gene of Saccharomyces cerevisiae.</title>
        <authorList>
            <person name="Buckholz R.G."/>
            <person name="Cooper T.G."/>
        </authorList>
    </citation>
    <scope>NUCLEOTIDE SEQUENCE [GENOMIC DNA] OF 1-197</scope>
</reference>
<reference key="5">
    <citation type="journal article" date="1992" name="Yeast">
        <authorList>
            <person name="Buckholz R.G."/>
            <person name="Cooper T.G."/>
        </authorList>
    </citation>
    <scope>ERRATUM OF PUBMED:1803816</scope>
</reference>
<reference key="6">
    <citation type="journal article" date="1993" name="Trends Biochem. Sci.">
        <title>The yeast open reading frame encoding a dual specificity phosphatase.</title>
        <authorList>
            <person name="Guan K."/>
            <person name="Hakes D.J."/>
            <person name="Dixon J.E."/>
            <person name="Park H.D."/>
            <person name="Cooper T.G."/>
        </authorList>
    </citation>
    <scope>SIMILARITY TO VH1</scope>
</reference>
<reference key="7">
    <citation type="journal article" date="2003" name="Nature">
        <title>Global analysis of protein expression in yeast.</title>
        <authorList>
            <person name="Ghaemmaghami S."/>
            <person name="Huh W.-K."/>
            <person name="Bower K."/>
            <person name="Howson R.W."/>
            <person name="Belle A."/>
            <person name="Dephoure N."/>
            <person name="O'Shea E.K."/>
            <person name="Weissman J.S."/>
        </authorList>
    </citation>
    <scope>LEVEL OF PROTEIN EXPRESSION [LARGE SCALE ANALYSIS]</scope>
</reference>
<reference key="8">
    <citation type="journal article" date="2008" name="Mol. Cell. Proteomics">
        <title>A multidimensional chromatography technology for in-depth phosphoproteome analysis.</title>
        <authorList>
            <person name="Albuquerque C.P."/>
            <person name="Smolka M.B."/>
            <person name="Payne S.H."/>
            <person name="Bafna V."/>
            <person name="Eng J."/>
            <person name="Zhou H."/>
        </authorList>
    </citation>
    <scope>PHOSPHORYLATION [LARGE SCALE ANALYSIS] AT SER-196</scope>
    <scope>IDENTIFICATION BY MASS SPECTROMETRY [LARGE SCALE ANALYSIS]</scope>
</reference>
<reference key="9">
    <citation type="journal article" date="2012" name="Proc. Natl. Acad. Sci. U.S.A.">
        <title>N-terminal acetylome analyses and functional insights of the N-terminal acetyltransferase NatB.</title>
        <authorList>
            <person name="Van Damme P."/>
            <person name="Lasa M."/>
            <person name="Polevoda B."/>
            <person name="Gazquez C."/>
            <person name="Elosegui-Artola A."/>
            <person name="Kim D.S."/>
            <person name="De Juan-Pardo E."/>
            <person name="Demeyer K."/>
            <person name="Hole K."/>
            <person name="Larrea E."/>
            <person name="Timmerman E."/>
            <person name="Prieto J."/>
            <person name="Arnesen T."/>
            <person name="Sherman F."/>
            <person name="Gevaert K."/>
            <person name="Aldabe R."/>
        </authorList>
    </citation>
    <scope>IDENTIFICATION BY MASS SPECTROMETRY [LARGE SCALE ANALYSIS]</scope>
</reference>
<organism>
    <name type="scientific">Saccharomyces cerevisiae (strain ATCC 204508 / S288c)</name>
    <name type="common">Baker's yeast</name>
    <dbReference type="NCBI Taxonomy" id="559292"/>
    <lineage>
        <taxon>Eukaryota</taxon>
        <taxon>Fungi</taxon>
        <taxon>Dikarya</taxon>
        <taxon>Ascomycota</taxon>
        <taxon>Saccharomycotina</taxon>
        <taxon>Saccharomycetes</taxon>
        <taxon>Saccharomycetales</taxon>
        <taxon>Saccharomycetaceae</taxon>
        <taxon>Saccharomyces</taxon>
    </lineage>
</organism>
<evidence type="ECO:0000255" key="1">
    <source>
        <dbReference type="PROSITE-ProRule" id="PRU00160"/>
    </source>
</evidence>
<evidence type="ECO:0000269" key="2">
    <source>
    </source>
</evidence>
<evidence type="ECO:0000269" key="3">
    <source>
    </source>
</evidence>
<evidence type="ECO:0000303" key="4">
    <source>
    </source>
</evidence>
<evidence type="ECO:0000305" key="5"/>
<evidence type="ECO:0000305" key="6">
    <source>
    </source>
</evidence>
<evidence type="ECO:0007744" key="7">
    <source>
    </source>
</evidence>
<feature type="chain" id="PRO_0000094854" description="Tyrosine-protein phosphatase YVH1">
    <location>
        <begin position="1"/>
        <end position="364"/>
    </location>
</feature>
<feature type="domain" description="Tyrosine-protein phosphatase" evidence="1">
    <location>
        <begin position="11"/>
        <end position="173"/>
    </location>
</feature>
<feature type="active site" description="Phosphocysteine intermediate" evidence="1">
    <location>
        <position position="117"/>
    </location>
</feature>
<feature type="modified residue" description="Phosphoserine" evidence="7">
    <location>
        <position position="196"/>
    </location>
</feature>
<feature type="sequence conflict" description="In Ref. 4; M69294." evidence="5" ref="4">
    <location>
        <position position="71"/>
    </location>
</feature>
<keyword id="KW-0002">3D-structure</keyword>
<keyword id="KW-0378">Hydrolase</keyword>
<keyword id="KW-0597">Phosphoprotein</keyword>
<keyword id="KW-0904">Protein phosphatase</keyword>
<keyword id="KW-1185">Reference proteome</keyword>
<keyword id="KW-0346">Stress response</keyword>
<sequence>MAGNANSVDEEVTRILGGIYLGGIRPIIDHRPLGAEFNITHILSVIKFQVIPEYLIRKGYTLKNIPIDDDDVTDVLQYFDETNRFIDQCLFPNEVEYSPRLVDFKKKPQRGAVFAHCQAGLSRSVTFIVAYLMYRYGLSLSMAMHAVKRKKPSVEPNENFMEQLHLFEKMGGDFVDFDNPAYKQWKLKQSIKLDPSGSELVSNSGMFKDSESSQDLDKLTEAEKSKVTAVRCKKCRTKLALSTSFIAHDPPSKESSEGHFIKRAANSHRIIDIQESQANCSHFFIEPLKWMQPELQGKQELEGKFSCPGCSSKVGGYNWKGSRCSCGKWVIPAIHLQTSKVDQFPLQSTALPNMVNFESEKVNR</sequence>
<gene>
    <name type="primary">YVH1</name>
    <name type="ordered locus">YIR026C</name>
</gene>
<name>PVH1_YEAST</name>
<comment type="function">
    <text>May be directly involved in signal transduction and/or cell cycle regulation. It is necessary for maintaining growth rate or spore germination. Could show both activity toward tyrosine-protein phosphate as well as with serine-protein phosphate.</text>
</comment>
<comment type="catalytic activity">
    <reaction evidence="2">
        <text>O-phospho-L-tyrosyl-[protein] + H2O = L-tyrosyl-[protein] + phosphate</text>
        <dbReference type="Rhea" id="RHEA:10684"/>
        <dbReference type="Rhea" id="RHEA-COMP:10136"/>
        <dbReference type="Rhea" id="RHEA-COMP:20101"/>
        <dbReference type="ChEBI" id="CHEBI:15377"/>
        <dbReference type="ChEBI" id="CHEBI:43474"/>
        <dbReference type="ChEBI" id="CHEBI:46858"/>
        <dbReference type="ChEBI" id="CHEBI:61978"/>
        <dbReference type="EC" id="3.1.3.48"/>
    </reaction>
    <physiologicalReaction direction="left-to-right" evidence="6">
        <dbReference type="Rhea" id="RHEA:10685"/>
    </physiologicalReaction>
</comment>
<comment type="interaction">
    <interactant intactId="EBI-14322">
        <id>Q02256</id>
    </interactant>
    <interactant intactId="EBI-23885">
        <id>P53145</id>
        <label>LSG1</label>
    </interactant>
    <organismsDiffer>false</organismsDiffer>
    <experiments>4</experiments>
</comment>
<comment type="interaction">
    <interactant intactId="EBI-14322">
        <id>Q02256</id>
    </interactant>
    <interactant intactId="EBI-9046">
        <id>Q12522</id>
        <label>TIF6</label>
    </interactant>
    <organismsDiffer>false</organismsDiffer>
    <experiments>3</experiments>
</comment>
<comment type="induction">
    <text evidence="2">By nitrogen starvation.</text>
</comment>
<comment type="miscellaneous">
    <text evidence="3">Present with 7570 molecules/cell in log phase SD medium.</text>
</comment>
<comment type="similarity">
    <text evidence="5">Belongs to the protein-tyrosine phosphatase family. Non-receptor class dual specificity subfamily.</text>
</comment>
<proteinExistence type="evidence at protein level"/>
<protein>
    <recommendedName>
        <fullName evidence="4">Tyrosine-protein phosphatase YVH1</fullName>
        <shortName>PTPase YVH1</shortName>
        <ecNumber evidence="2">3.1.3.48</ecNumber>
    </recommendedName>
</protein>